<keyword id="KW-0002">3D-structure</keyword>
<keyword id="KW-0064">Aspartyl protease</keyword>
<keyword id="KW-0167">Capsid protein</keyword>
<keyword id="KW-1262">Eukaryotic host gene expression shutoff by virus</keyword>
<keyword id="KW-1193">Eukaryotic host translation shutoff by virus</keyword>
<keyword id="KW-1190">Host gene expression shutoff by virus</keyword>
<keyword id="KW-0945">Host-virus interaction</keyword>
<keyword id="KW-0378">Hydrolase</keyword>
<keyword id="KW-0449">Lipoprotein</keyword>
<keyword id="KW-0479">Metal-binding</keyword>
<keyword id="KW-0519">Myristate</keyword>
<keyword id="KW-0597">Phosphoprotein</keyword>
<keyword id="KW-0645">Protease</keyword>
<keyword id="KW-0677">Repeat</keyword>
<keyword id="KW-0688">Ribosomal frameshifting</keyword>
<keyword id="KW-0543">Viral nucleoprotein</keyword>
<keyword id="KW-0946">Virion</keyword>
<keyword id="KW-0862">Zinc</keyword>
<keyword id="KW-0863">Zinc-finger</keyword>
<proteinExistence type="evidence at protein level"/>
<organism>
    <name type="scientific">Human T-cell leukemia virus 1 (isolate Melanesia mel5 subtype C)</name>
    <name type="common">HTLV-1</name>
    <dbReference type="NCBI Taxonomy" id="402046"/>
    <lineage>
        <taxon>Viruses</taxon>
        <taxon>Riboviria</taxon>
        <taxon>Pararnavirae</taxon>
        <taxon>Artverviricota</taxon>
        <taxon>Revtraviricetes</taxon>
        <taxon>Ortervirales</taxon>
        <taxon>Retroviridae</taxon>
        <taxon>Orthoretrovirinae</taxon>
        <taxon>Deltaretrovirus</taxon>
        <taxon>Primate T-lymphotropic virus 1</taxon>
    </lineage>
</organism>
<feature type="initiator methionine" description="Removed; by host" evidence="3">
    <location>
        <position position="1"/>
    </location>
</feature>
<feature type="chain" id="PRO_0000259802" description="Gag-Pro polyprotein">
    <location>
        <begin position="2"/>
        <end position="651"/>
    </location>
</feature>
<feature type="chain" id="PRO_0000259803" description="Matrix protein p19">
    <location>
        <begin position="2"/>
        <end position="130"/>
    </location>
</feature>
<feature type="chain" id="PRO_0000259804" description="Capsid protein p24">
    <location>
        <begin position="131"/>
        <end position="344"/>
    </location>
</feature>
<feature type="chain" id="PRO_0000259805" description="Nucleocapsid protein p15-pro">
    <location>
        <begin position="345"/>
        <end position="449"/>
    </location>
</feature>
<feature type="chain" id="PRO_0000259806" description="Protease">
    <location>
        <begin position="450"/>
        <end position="574"/>
    </location>
</feature>
<feature type="peptide" id="PRO_0000259807" description="p1">
    <location>
        <begin position="575"/>
        <end position="582"/>
    </location>
</feature>
<feature type="chain" id="PRO_0000259808" description="Transframe peptide">
    <location>
        <begin position="583"/>
        <end position="651"/>
    </location>
</feature>
<feature type="domain" description="Peptidase A2" evidence="5">
    <location>
        <begin position="476"/>
        <end position="554"/>
    </location>
</feature>
<feature type="zinc finger region" description="CCHC-type 1" evidence="4">
    <location>
        <begin position="355"/>
        <end position="372"/>
    </location>
</feature>
<feature type="zinc finger region" description="CCHC-type 2" evidence="4">
    <location>
        <begin position="378"/>
        <end position="395"/>
    </location>
</feature>
<feature type="region of interest" description="Disordered" evidence="6">
    <location>
        <begin position="93"/>
        <end position="143"/>
    </location>
</feature>
<feature type="region of interest" description="Disordered" evidence="6">
    <location>
        <begin position="632"/>
        <end position="651"/>
    </location>
</feature>
<feature type="short sequence motif" description="PPXY motif" evidence="1">
    <location>
        <begin position="118"/>
        <end position="121"/>
    </location>
</feature>
<feature type="short sequence motif" description="PTAP/PSAP motif" evidence="1">
    <location>
        <begin position="124"/>
        <end position="127"/>
    </location>
</feature>
<feature type="compositionally biased region" description="Polar residues" evidence="6">
    <location>
        <begin position="641"/>
        <end position="651"/>
    </location>
</feature>
<feature type="active site" description="For protease activity; shared with dimeric partner" evidence="5">
    <location>
        <position position="481"/>
    </location>
</feature>
<feature type="site" description="Cleavage; by viral protease" evidence="2">
    <location>
        <begin position="130"/>
        <end position="131"/>
    </location>
</feature>
<feature type="site" description="Cleavage; by viral protease" evidence="2">
    <location>
        <begin position="344"/>
        <end position="345"/>
    </location>
</feature>
<feature type="site" description="Cleavage; by viral protease" evidence="2">
    <location>
        <begin position="449"/>
        <end position="450"/>
    </location>
</feature>
<feature type="site" description="Cleavage; by viral protease" evidence="2">
    <location>
        <begin position="574"/>
        <end position="575"/>
    </location>
</feature>
<feature type="site" description="Cleavage; by viral protease" evidence="2">
    <location>
        <begin position="582"/>
        <end position="583"/>
    </location>
</feature>
<feature type="modified residue" description="Phosphoserine; by host MAPK1" evidence="1">
    <location>
        <position position="105"/>
    </location>
</feature>
<feature type="lipid moiety-binding region" description="N-myristoyl glycine; by host" evidence="3">
    <location>
        <position position="2"/>
    </location>
</feature>
<comment type="function">
    <molecule>Gag-Pro polyprotein</molecule>
    <text evidence="1">The matrix domain targets Gag, Gag-Pro and Gag-Pro-Pol polyproteins to the plasma membrane via a multipartite membrane binding signal, that includes its myristoylated N-terminus.</text>
</comment>
<comment type="function">
    <molecule>Matrix protein p19</molecule>
    <text evidence="1">Matrix protein.</text>
</comment>
<comment type="function">
    <molecule>Capsid protein p24</molecule>
    <text evidence="2">Forms the spherical core of the virus that encapsulates the genomic RNA-nucleocapsid complex.</text>
</comment>
<comment type="function">
    <molecule>Nucleocapsid protein p15-pro</molecule>
    <text evidence="2">Binds strongly to viral nucleic acids and promote their aggregation. Also destabilizes the nucleic acids duplexes via highly structured zinc-binding motifs.</text>
</comment>
<comment type="function">
    <molecule>Protease</molecule>
    <text evidence="2 5">The aspartyl protease mediates proteolytic cleavages of Gag and Gag-Pol polyproteins during or shortly after the release of the virion from the plasma membrane. Cleavages take place as an ordered, step-wise cascade to yield mature proteins. This process is called maturation. Displays maximal activity during the budding process just prior to particle release from the cell (Potential). Cleaves the translation initiation factor eIF4G leading to the inhibition of host cap-dependent translation (By similarity).</text>
</comment>
<comment type="subunit">
    <molecule>Gag-Pro polyprotein</molecule>
    <text evidence="1">Homodimer; the homodimers are part of the immature particles. Interacts with human TSG101 and NEDD4; these interactions are essential for budding and release of viral particles.</text>
</comment>
<comment type="subunit">
    <molecule>Matrix protein p19</molecule>
    <text evidence="1">Homodimer; further assembles as homohexamers.</text>
</comment>
<comment type="subcellular location">
    <molecule>Matrix protein p19</molecule>
    <subcellularLocation>
        <location evidence="1">Virion</location>
    </subcellularLocation>
</comment>
<comment type="subcellular location">
    <molecule>Capsid protein p24</molecule>
    <subcellularLocation>
        <location evidence="1">Virion</location>
    </subcellularLocation>
</comment>
<comment type="subcellular location">
    <molecule>Nucleocapsid protein p15-pro</molecule>
    <subcellularLocation>
        <location evidence="1">Virion</location>
    </subcellularLocation>
</comment>
<comment type="alternative products">
    <event type="ribosomal frameshifting"/>
    <isoform>
        <id>P0C210-1</id>
        <name>Gag-Pro polyprotein</name>
        <sequence type="displayed"/>
    </isoform>
    <isoform>
        <id>P0C209-1</id>
        <name>Gag polyprotein</name>
        <sequence type="external"/>
    </isoform>
    <isoform>
        <id>P0C211-1</id>
        <name>Gag-Pol polyprotein</name>
        <sequence type="external"/>
    </isoform>
    <text evidence="7">This strategy of translation probably allows the virus to modulate the quantity of each viral protein.</text>
</comment>
<comment type="domain">
    <molecule>Capsid protein p24</molecule>
    <text evidence="2">The capsid protein N-terminus seems to be involved in Gag-Gag interactions.</text>
</comment>
<comment type="domain">
    <molecule>Gag-Pro polyprotein</molecule>
    <text evidence="1">Late-budding domains (L domains) are short sequence motifs essential for viral particle release. They can occur individually or in close proximity within structural proteins. They interacts with sorting cellular proteins of the multivesicular body (MVB) pathway. Most of these proteins are class E vacuolar protein sorting factors belonging to ESCRT-I, ESCRT-II or ESCRT-III complexes. Matrix protein p19 contains two L domains: a PTAP/PSAP motif which interacts with the UEV domain of TSG101, and a PPXY motif which binds to the WW domains of the ubiquitin ligase NEDD4.</text>
</comment>
<comment type="PTM">
    <molecule>Gag-Pro polyprotein</molecule>
    <text evidence="2">Specific enzymatic cleavages by the viral protease yield mature proteins. The polyprotein is cleaved during and after budding, this process is termed maturation. The protease is autoproteolytically processed at its N- and C-termini.</text>
</comment>
<comment type="PTM">
    <molecule>Matrix protein p19</molecule>
    <text evidence="1">Phosphorylation of the matrix protein p19 by MAPK1 seems to play a role in budding.</text>
</comment>
<comment type="PTM">
    <molecule>Gag-Pro polyprotein</molecule>
    <text evidence="1">Myristoylated. Myristoylation of the matrix (MA) domain mediates the transport and binding of Gag polyproteins to the host plasma membrane and is required for the assembly of viral particles.</text>
</comment>
<comment type="miscellaneous">
    <text evidence="7">HTLV-1 lineages are divided in four clades, A (Cosmopolitan), B (Central African group), C (Melanesian group) and D (New Central African group).</text>
</comment>
<comment type="miscellaneous">
    <molecule>Isoform Gag-Pro polyprotein</molecule>
    <text evidence="7">Produced by -1 ribosomal frameshifting at the gag-pro genes boundary.</text>
</comment>
<dbReference type="EC" id="3.4.23.-" evidence="5"/>
<dbReference type="EMBL" id="L02534">
    <property type="status" value="NOT_ANNOTATED_CDS"/>
    <property type="molecule type" value="Genomic_DNA"/>
</dbReference>
<dbReference type="PDB" id="2KPZ">
    <property type="method" value="NMR"/>
    <property type="chains" value="B=113-124"/>
</dbReference>
<dbReference type="PDBsum" id="2KPZ"/>
<dbReference type="BMRB" id="P0C210"/>
<dbReference type="SMR" id="P0C210"/>
<dbReference type="EvolutionaryTrace" id="P0C210"/>
<dbReference type="GO" id="GO:0019013">
    <property type="term" value="C:viral nucleocapsid"/>
    <property type="evidence" value="ECO:0007669"/>
    <property type="project" value="UniProtKB-KW"/>
</dbReference>
<dbReference type="GO" id="GO:0004190">
    <property type="term" value="F:aspartic-type endopeptidase activity"/>
    <property type="evidence" value="ECO:0007669"/>
    <property type="project" value="UniProtKB-KW"/>
</dbReference>
<dbReference type="GO" id="GO:0003676">
    <property type="term" value="F:nucleic acid binding"/>
    <property type="evidence" value="ECO:0007669"/>
    <property type="project" value="InterPro"/>
</dbReference>
<dbReference type="GO" id="GO:0005198">
    <property type="term" value="F:structural molecule activity"/>
    <property type="evidence" value="ECO:0007669"/>
    <property type="project" value="InterPro"/>
</dbReference>
<dbReference type="GO" id="GO:0008270">
    <property type="term" value="F:zinc ion binding"/>
    <property type="evidence" value="ECO:0007669"/>
    <property type="project" value="UniProtKB-KW"/>
</dbReference>
<dbReference type="GO" id="GO:0006508">
    <property type="term" value="P:proteolysis"/>
    <property type="evidence" value="ECO:0007669"/>
    <property type="project" value="UniProtKB-KW"/>
</dbReference>
<dbReference type="GO" id="GO:0039657">
    <property type="term" value="P:symbiont-mediated suppression of host gene expression"/>
    <property type="evidence" value="ECO:0007669"/>
    <property type="project" value="UniProtKB-KW"/>
</dbReference>
<dbReference type="GO" id="GO:0075523">
    <property type="term" value="P:viral translational frameshifting"/>
    <property type="evidence" value="ECO:0007669"/>
    <property type="project" value="UniProtKB-KW"/>
</dbReference>
<dbReference type="Gene3D" id="1.10.1200.30">
    <property type="match status" value="1"/>
</dbReference>
<dbReference type="Gene3D" id="2.40.70.10">
    <property type="entry name" value="Acid Proteases"/>
    <property type="match status" value="1"/>
</dbReference>
<dbReference type="Gene3D" id="1.10.185.10">
    <property type="entry name" value="Delta-retroviral matrix"/>
    <property type="match status" value="1"/>
</dbReference>
<dbReference type="Gene3D" id="1.10.375.10">
    <property type="entry name" value="Human Immunodeficiency Virus Type 1 Capsid Protein"/>
    <property type="match status" value="1"/>
</dbReference>
<dbReference type="Gene3D" id="4.10.60.10">
    <property type="entry name" value="Zinc finger, CCHC-type"/>
    <property type="match status" value="1"/>
</dbReference>
<dbReference type="InterPro" id="IPR001969">
    <property type="entry name" value="Aspartic_peptidase_AS"/>
</dbReference>
<dbReference type="InterPro" id="IPR003139">
    <property type="entry name" value="D_retro_matrix"/>
</dbReference>
<dbReference type="InterPro" id="IPR045345">
    <property type="entry name" value="Gag_p24_C"/>
</dbReference>
<dbReference type="InterPro" id="IPR001995">
    <property type="entry name" value="Peptidase_A2_cat"/>
</dbReference>
<dbReference type="InterPro" id="IPR021109">
    <property type="entry name" value="Peptidase_aspartic_dom_sf"/>
</dbReference>
<dbReference type="InterPro" id="IPR050195">
    <property type="entry name" value="Primate_lentivir_Gag_pol-like"/>
</dbReference>
<dbReference type="InterPro" id="IPR018061">
    <property type="entry name" value="Retropepsins"/>
</dbReference>
<dbReference type="InterPro" id="IPR008916">
    <property type="entry name" value="Retrov_capsid_C"/>
</dbReference>
<dbReference type="InterPro" id="IPR008919">
    <property type="entry name" value="Retrov_capsid_N"/>
</dbReference>
<dbReference type="InterPro" id="IPR010999">
    <property type="entry name" value="Retrovr_matrix"/>
</dbReference>
<dbReference type="InterPro" id="IPR001878">
    <property type="entry name" value="Znf_CCHC"/>
</dbReference>
<dbReference type="InterPro" id="IPR036875">
    <property type="entry name" value="Znf_CCHC_sf"/>
</dbReference>
<dbReference type="PANTHER" id="PTHR40389">
    <property type="entry name" value="ENDOGENOUS RETROVIRUS GROUP K MEMBER 24 GAG POLYPROTEIN-RELATED"/>
    <property type="match status" value="1"/>
</dbReference>
<dbReference type="PANTHER" id="PTHR40389:SF3">
    <property type="entry name" value="IGE-BINDING PROTEIN"/>
    <property type="match status" value="1"/>
</dbReference>
<dbReference type="Pfam" id="PF02228">
    <property type="entry name" value="Gag_p19"/>
    <property type="match status" value="1"/>
</dbReference>
<dbReference type="Pfam" id="PF00607">
    <property type="entry name" value="Gag_p24"/>
    <property type="match status" value="1"/>
</dbReference>
<dbReference type="Pfam" id="PF19317">
    <property type="entry name" value="Gag_p24_C"/>
    <property type="match status" value="1"/>
</dbReference>
<dbReference type="Pfam" id="PF00077">
    <property type="entry name" value="RVP"/>
    <property type="match status" value="1"/>
</dbReference>
<dbReference type="Pfam" id="PF00098">
    <property type="entry name" value="zf-CCHC"/>
    <property type="match status" value="1"/>
</dbReference>
<dbReference type="SMART" id="SM00343">
    <property type="entry name" value="ZnF_C2HC"/>
    <property type="match status" value="2"/>
</dbReference>
<dbReference type="SUPFAM" id="SSF50630">
    <property type="entry name" value="Acid proteases"/>
    <property type="match status" value="1"/>
</dbReference>
<dbReference type="SUPFAM" id="SSF47836">
    <property type="entry name" value="Retroviral matrix proteins"/>
    <property type="match status" value="1"/>
</dbReference>
<dbReference type="SUPFAM" id="SSF47353">
    <property type="entry name" value="Retrovirus capsid dimerization domain-like"/>
    <property type="match status" value="1"/>
</dbReference>
<dbReference type="SUPFAM" id="SSF47943">
    <property type="entry name" value="Retrovirus capsid protein, N-terminal core domain"/>
    <property type="match status" value="1"/>
</dbReference>
<dbReference type="SUPFAM" id="SSF57756">
    <property type="entry name" value="Retrovirus zinc finger-like domains"/>
    <property type="match status" value="1"/>
</dbReference>
<dbReference type="PROSITE" id="PS50175">
    <property type="entry name" value="ASP_PROT_RETROV"/>
    <property type="match status" value="1"/>
</dbReference>
<dbReference type="PROSITE" id="PS00141">
    <property type="entry name" value="ASP_PROTEASE"/>
    <property type="match status" value="1"/>
</dbReference>
<dbReference type="PROSITE" id="PS50158">
    <property type="entry name" value="ZF_CCHC"/>
    <property type="match status" value="1"/>
</dbReference>
<name>PRO_HTL1L</name>
<sequence length="651" mass="71843">MGQIFPRSANPIPRPPRGLATHHWLNFLQAAYRLEPGPSSYDFHQLKTVLKMALETPVWMCPINYSLLASLLPKGYPGQVNEILQVLIQTQTQIPSHPAPPPPSSPTHDPPDSDPQIPPPYVEPTAPQVLPVMHPHGVPPTHRPWQMKDLQAIKQEVSQAAPGSPQFMQTIRLAVQQFDPTAKDLQDLLQYLCSSLVASLHHQQLDSLISEAETRGITGYNPLAGPLRVQANNPQQQGLRREYQQLWLTAFAALPGSAKDPSWASILQGLEEPYHTFVERLNVALDNGLPEGTPKDPILRSLAYSNANKECQKLLQARGHTNSPLGDMLRACQAWTPRDKTKVLVVQPKKPPPNQPCFRCGKAGHWSRDCAQPRPPPGPCPLCQDPTHWKRDCPRLKPAIPEPEPEEDALLLDLPADIPHPKNLHRGGGLTSPPTLRQVHPNKDPASILPVIPLDPARRPLIKAQVDTQTSHPRTIEALLDTGADMTVLPIALFSSDTPLKDTSVLGAGGQTQDHFKLTSLPVLIRLPFRTTPIVLTSCLVDTKNNWAIIGRDALQQCQGVLYLPEAKRPPVILPIQAPAVLGLEHLPRPPEISQFPLNQNASRPCNTWSGRPWRQAISNRTPGQEITQYSQLKRPMEPGDSSTTCGPLIL</sequence>
<accession>P0C210</accession>
<protein>
    <recommendedName>
        <fullName>Gag-Pro polyprotein</fullName>
    </recommendedName>
    <alternativeName>
        <fullName>Pr76Gag-Pro</fullName>
    </alternativeName>
    <component>
        <recommendedName>
            <fullName>Matrix protein p19</fullName>
            <shortName>MA</shortName>
        </recommendedName>
    </component>
    <component>
        <recommendedName>
            <fullName>Capsid protein p24</fullName>
            <shortName>CA</shortName>
        </recommendedName>
    </component>
    <component>
        <recommendedName>
            <fullName>Nucleocapsid protein p15-pro</fullName>
            <shortName>NC'</shortName>
            <shortName>NC-pro</shortName>
        </recommendedName>
    </component>
    <component>
        <recommendedName>
            <fullName>Protease</fullName>
            <shortName>PR</shortName>
            <ecNumber evidence="5">3.4.23.-</ecNumber>
        </recommendedName>
    </component>
    <component>
        <recommendedName>
            <fullName>p1</fullName>
        </recommendedName>
    </component>
    <component>
        <recommendedName>
            <fullName>Transframe peptide</fullName>
            <shortName>TFP</shortName>
        </recommendedName>
        <alternativeName>
            <fullName>p8</fullName>
        </alternativeName>
    </component>
</protein>
<gene>
    <name type="primary">gag-pro</name>
    <name type="synonym">prt</name>
</gene>
<organismHost>
    <name type="scientific">Homo sapiens</name>
    <name type="common">Human</name>
    <dbReference type="NCBI Taxonomy" id="9606"/>
</organismHost>
<reference key="1">
    <citation type="journal article" date="1993" name="J. Virol.">
        <title>Complete nucleotide sequence of a highly divergent human T-cell leukemia (lymphotropic) virus type I (HTLV-I) variant from melanesia: genetic and phylogenetic relationship to HTLV-I strains from other geographical regions.</title>
        <authorList>
            <person name="Gessain A."/>
            <person name="Boeri E."/>
            <person name="Yanagihara R."/>
            <person name="Gallo R.C."/>
            <person name="Franchini G."/>
        </authorList>
    </citation>
    <scope>NUCLEOTIDE SEQUENCE [GENOMIC DNA]</scope>
</reference>
<evidence type="ECO:0000250" key="1">
    <source>
        <dbReference type="UniProtKB" id="P03345"/>
    </source>
</evidence>
<evidence type="ECO:0000250" key="2">
    <source>
        <dbReference type="UniProtKB" id="P10274"/>
    </source>
</evidence>
<evidence type="ECO:0000255" key="3"/>
<evidence type="ECO:0000255" key="4">
    <source>
        <dbReference type="PROSITE-ProRule" id="PRU00047"/>
    </source>
</evidence>
<evidence type="ECO:0000255" key="5">
    <source>
        <dbReference type="PROSITE-ProRule" id="PRU00275"/>
    </source>
</evidence>
<evidence type="ECO:0000256" key="6">
    <source>
        <dbReference type="SAM" id="MobiDB-lite"/>
    </source>
</evidence>
<evidence type="ECO:0000305" key="7"/>